<feature type="chain" id="PRO_0000371688" description="Putative pectinesterase/pectinesterase inhibitor 38">
    <location>
        <begin position="1"/>
        <end position="474"/>
    </location>
</feature>
<feature type="region of interest" description="Pectinesterase inhibitor 38">
    <location>
        <begin position="1"/>
        <end position="130"/>
    </location>
</feature>
<feature type="region of interest" description="Pectinesterase 38">
    <location>
        <begin position="164"/>
        <end position="461"/>
    </location>
</feature>
<feature type="active site" description="Proton donor; for pectinesterase activity" evidence="3">
    <location>
        <position position="294"/>
    </location>
</feature>
<feature type="active site" description="Nucleophile; for pectinesterase activity" evidence="3">
    <location>
        <position position="315"/>
    </location>
</feature>
<feature type="binding site" evidence="1">
    <location>
        <position position="241"/>
    </location>
    <ligand>
        <name>substrate</name>
        <note>for pectinesterase activity</note>
    </ligand>
</feature>
<feature type="binding site" evidence="1">
    <location>
        <position position="271"/>
    </location>
    <ligand>
        <name>substrate</name>
        <note>for pectinesterase activity</note>
    </ligand>
</feature>
<feature type="binding site" evidence="1">
    <location>
        <position position="380"/>
    </location>
    <ligand>
        <name>substrate</name>
        <note>for pectinesterase activity</note>
    </ligand>
</feature>
<feature type="binding site" evidence="1">
    <location>
        <position position="382"/>
    </location>
    <ligand>
        <name>substrate</name>
        <note>for pectinesterase activity</note>
    </ligand>
</feature>
<feature type="site" description="Transition state stabilizer" evidence="1">
    <location>
        <position position="293"/>
    </location>
</feature>
<feature type="glycosylation site" description="N-linked (GlcNAc...) asparagine" evidence="2">
    <location>
        <position position="80"/>
    </location>
</feature>
<feature type="glycosylation site" description="N-linked (GlcNAc...) asparagine" evidence="2">
    <location>
        <position position="351"/>
    </location>
</feature>
<feature type="glycosylation site" description="N-linked (GlcNAc...) asparagine" evidence="2">
    <location>
        <position position="409"/>
    </location>
</feature>
<feature type="disulfide bond" evidence="1">
    <location>
        <begin position="308"/>
        <end position="328"/>
    </location>
</feature>
<evidence type="ECO:0000250" key="1"/>
<evidence type="ECO:0000255" key="2"/>
<evidence type="ECO:0000255" key="3">
    <source>
        <dbReference type="PROSITE-ProRule" id="PRU10040"/>
    </source>
</evidence>
<evidence type="ECO:0000305" key="4"/>
<comment type="function">
    <text evidence="1">Acts in the modification of cell walls via demethylesterification of cell wall pectin.</text>
</comment>
<comment type="catalytic activity">
    <reaction>
        <text>[(1-&gt;4)-alpha-D-galacturonosyl methyl ester](n) + n H2O = [(1-&gt;4)-alpha-D-galacturonosyl](n) + n methanol + n H(+)</text>
        <dbReference type="Rhea" id="RHEA:22380"/>
        <dbReference type="Rhea" id="RHEA-COMP:14570"/>
        <dbReference type="Rhea" id="RHEA-COMP:14573"/>
        <dbReference type="ChEBI" id="CHEBI:15377"/>
        <dbReference type="ChEBI" id="CHEBI:15378"/>
        <dbReference type="ChEBI" id="CHEBI:17790"/>
        <dbReference type="ChEBI" id="CHEBI:140522"/>
        <dbReference type="ChEBI" id="CHEBI:140523"/>
        <dbReference type="EC" id="3.1.1.11"/>
    </reaction>
</comment>
<comment type="pathway">
    <text>Glycan metabolism; pectin degradation; 2-dehydro-3-deoxy-D-gluconate from pectin: step 1/5.</text>
</comment>
<comment type="subcellular location">
    <subcellularLocation>
        <location evidence="1">Secreted</location>
        <location evidence="1">Cell wall</location>
    </subcellularLocation>
</comment>
<comment type="miscellaneous">
    <text>The PMEI region may act as an autoinhibitory domain and prevent untimely PME activity during transport.</text>
</comment>
<comment type="similarity">
    <text evidence="4">In the N-terminal section; belongs to the PMEI family.</text>
</comment>
<comment type="similarity">
    <text evidence="4">In the C-terminal section; belongs to the pectinesterase family.</text>
</comment>
<comment type="caution">
    <text evidence="4">Lacks the conserved signal peptide, which is one of the features of the pectinesterase family.</text>
</comment>
<name>PME38_ARATH</name>
<dbReference type="EC" id="3.1.1.11"/>
<dbReference type="EMBL" id="AF069299">
    <property type="protein sequence ID" value="AAC19295.1"/>
    <property type="molecule type" value="Genomic_DNA"/>
</dbReference>
<dbReference type="EMBL" id="AL161471">
    <property type="protein sequence ID" value="CAB80777.1"/>
    <property type="molecule type" value="Genomic_DNA"/>
</dbReference>
<dbReference type="EMBL" id="CP002687">
    <property type="protein sequence ID" value="AEE81836.1"/>
    <property type="molecule type" value="Genomic_DNA"/>
</dbReference>
<dbReference type="PIR" id="T01347">
    <property type="entry name" value="T01347"/>
</dbReference>
<dbReference type="RefSeq" id="NP_191930.1">
    <property type="nucleotide sequence ID" value="NM_116236.1"/>
</dbReference>
<dbReference type="SMR" id="O81320"/>
<dbReference type="FunCoup" id="O81320">
    <property type="interactions" value="129"/>
</dbReference>
<dbReference type="STRING" id="3702.O81320"/>
<dbReference type="GlyCosmos" id="O81320">
    <property type="glycosylation" value="3 sites, No reported glycans"/>
</dbReference>
<dbReference type="GlyGen" id="O81320">
    <property type="glycosylation" value="3 sites"/>
</dbReference>
<dbReference type="PaxDb" id="3702-AT4G00190.1"/>
<dbReference type="ProteomicsDB" id="234983"/>
<dbReference type="EnsemblPlants" id="AT4G00190.1">
    <property type="protein sequence ID" value="AT4G00190.1"/>
    <property type="gene ID" value="AT4G00190"/>
</dbReference>
<dbReference type="GeneID" id="828218"/>
<dbReference type="Gramene" id="AT4G00190.1">
    <property type="protein sequence ID" value="AT4G00190.1"/>
    <property type="gene ID" value="AT4G00190"/>
</dbReference>
<dbReference type="KEGG" id="ath:AT4G00190"/>
<dbReference type="Araport" id="AT4G00190"/>
<dbReference type="TAIR" id="AT4G00190">
    <property type="gene designation" value="PME38"/>
</dbReference>
<dbReference type="eggNOG" id="ENOG502QSQ4">
    <property type="taxonomic scope" value="Eukaryota"/>
</dbReference>
<dbReference type="HOGENOM" id="CLU_012243_9_1_1"/>
<dbReference type="InParanoid" id="O81320"/>
<dbReference type="OMA" id="GNEMCDE"/>
<dbReference type="PhylomeDB" id="O81320"/>
<dbReference type="BioCyc" id="ARA:AT4G00190-MONOMER"/>
<dbReference type="UniPathway" id="UPA00545">
    <property type="reaction ID" value="UER00823"/>
</dbReference>
<dbReference type="PRO" id="PR:O81320"/>
<dbReference type="Proteomes" id="UP000006548">
    <property type="component" value="Chromosome 4"/>
</dbReference>
<dbReference type="ExpressionAtlas" id="O81320">
    <property type="expression patterns" value="baseline and differential"/>
</dbReference>
<dbReference type="GO" id="GO:0005576">
    <property type="term" value="C:extracellular region"/>
    <property type="evidence" value="ECO:0007669"/>
    <property type="project" value="UniProtKB-KW"/>
</dbReference>
<dbReference type="GO" id="GO:0004857">
    <property type="term" value="F:enzyme inhibitor activity"/>
    <property type="evidence" value="ECO:0007669"/>
    <property type="project" value="InterPro"/>
</dbReference>
<dbReference type="GO" id="GO:0030599">
    <property type="term" value="F:pectinesterase activity"/>
    <property type="evidence" value="ECO:0007669"/>
    <property type="project" value="UniProtKB-EC"/>
</dbReference>
<dbReference type="GO" id="GO:0042545">
    <property type="term" value="P:cell wall modification"/>
    <property type="evidence" value="ECO:0007669"/>
    <property type="project" value="InterPro"/>
</dbReference>
<dbReference type="GO" id="GO:0045490">
    <property type="term" value="P:pectin catabolic process"/>
    <property type="evidence" value="ECO:0007669"/>
    <property type="project" value="UniProtKB-UniPathway"/>
</dbReference>
<dbReference type="CDD" id="cd15798">
    <property type="entry name" value="PMEI-like_3"/>
    <property type="match status" value="1"/>
</dbReference>
<dbReference type="FunFam" id="1.20.140.40:FF:000066">
    <property type="match status" value="1"/>
</dbReference>
<dbReference type="FunFam" id="2.160.20.10:FF:000001">
    <property type="entry name" value="Pectinesterase"/>
    <property type="match status" value="1"/>
</dbReference>
<dbReference type="Gene3D" id="1.20.140.40">
    <property type="entry name" value="Invertase/pectin methylesterase inhibitor family protein"/>
    <property type="match status" value="1"/>
</dbReference>
<dbReference type="Gene3D" id="2.160.20.10">
    <property type="entry name" value="Single-stranded right-handed beta-helix, Pectin lyase-like"/>
    <property type="match status" value="1"/>
</dbReference>
<dbReference type="InterPro" id="IPR035513">
    <property type="entry name" value="Invertase/methylesterase_inhib"/>
</dbReference>
<dbReference type="InterPro" id="IPR012334">
    <property type="entry name" value="Pectin_lyas_fold"/>
</dbReference>
<dbReference type="InterPro" id="IPR011050">
    <property type="entry name" value="Pectin_lyase_fold/virulence"/>
</dbReference>
<dbReference type="InterPro" id="IPR033131">
    <property type="entry name" value="Pectinesterase_Asp_AS"/>
</dbReference>
<dbReference type="InterPro" id="IPR000070">
    <property type="entry name" value="Pectinesterase_cat"/>
</dbReference>
<dbReference type="InterPro" id="IPR006501">
    <property type="entry name" value="Pectinesterase_inhib_dom"/>
</dbReference>
<dbReference type="NCBIfam" id="TIGR01614">
    <property type="entry name" value="PME_inhib"/>
    <property type="match status" value="1"/>
</dbReference>
<dbReference type="PANTHER" id="PTHR31707">
    <property type="entry name" value="PECTINESTERASE"/>
    <property type="match status" value="1"/>
</dbReference>
<dbReference type="Pfam" id="PF01095">
    <property type="entry name" value="Pectinesterase"/>
    <property type="match status" value="1"/>
</dbReference>
<dbReference type="Pfam" id="PF04043">
    <property type="entry name" value="PMEI"/>
    <property type="match status" value="1"/>
</dbReference>
<dbReference type="SMART" id="SM00856">
    <property type="entry name" value="PMEI"/>
    <property type="match status" value="1"/>
</dbReference>
<dbReference type="SUPFAM" id="SSF51126">
    <property type="entry name" value="Pectin lyase-like"/>
    <property type="match status" value="1"/>
</dbReference>
<dbReference type="SUPFAM" id="SSF101148">
    <property type="entry name" value="Plant invertase/pectin methylesterase inhibitor"/>
    <property type="match status" value="1"/>
</dbReference>
<dbReference type="PROSITE" id="PS00503">
    <property type="entry name" value="PECTINESTERASE_2"/>
    <property type="match status" value="1"/>
</dbReference>
<reference key="1">
    <citation type="journal article" date="1999" name="Nature">
        <title>Sequence and analysis of chromosome 4 of the plant Arabidopsis thaliana.</title>
        <authorList>
            <person name="Mayer K.F.X."/>
            <person name="Schueller C."/>
            <person name="Wambutt R."/>
            <person name="Murphy G."/>
            <person name="Volckaert G."/>
            <person name="Pohl T."/>
            <person name="Duesterhoeft A."/>
            <person name="Stiekema W."/>
            <person name="Entian K.-D."/>
            <person name="Terryn N."/>
            <person name="Harris B."/>
            <person name="Ansorge W."/>
            <person name="Brandt P."/>
            <person name="Grivell L.A."/>
            <person name="Rieger M."/>
            <person name="Weichselgartner M."/>
            <person name="de Simone V."/>
            <person name="Obermaier B."/>
            <person name="Mache R."/>
            <person name="Mueller M."/>
            <person name="Kreis M."/>
            <person name="Delseny M."/>
            <person name="Puigdomenech P."/>
            <person name="Watson M."/>
            <person name="Schmidtheini T."/>
            <person name="Reichert B."/>
            <person name="Portetelle D."/>
            <person name="Perez-Alonso M."/>
            <person name="Boutry M."/>
            <person name="Bancroft I."/>
            <person name="Vos P."/>
            <person name="Hoheisel J."/>
            <person name="Zimmermann W."/>
            <person name="Wedler H."/>
            <person name="Ridley P."/>
            <person name="Langham S.-A."/>
            <person name="McCullagh B."/>
            <person name="Bilham L."/>
            <person name="Robben J."/>
            <person name="van der Schueren J."/>
            <person name="Grymonprez B."/>
            <person name="Chuang Y.-J."/>
            <person name="Vandenbussche F."/>
            <person name="Braeken M."/>
            <person name="Weltjens I."/>
            <person name="Voet M."/>
            <person name="Bastiaens I."/>
            <person name="Aert R."/>
            <person name="Defoor E."/>
            <person name="Weitzenegger T."/>
            <person name="Bothe G."/>
            <person name="Ramsperger U."/>
            <person name="Hilbert H."/>
            <person name="Braun M."/>
            <person name="Holzer E."/>
            <person name="Brandt A."/>
            <person name="Peters S."/>
            <person name="van Staveren M."/>
            <person name="Dirkse W."/>
            <person name="Mooijman P."/>
            <person name="Klein Lankhorst R."/>
            <person name="Rose M."/>
            <person name="Hauf J."/>
            <person name="Koetter P."/>
            <person name="Berneiser S."/>
            <person name="Hempel S."/>
            <person name="Feldpausch M."/>
            <person name="Lamberth S."/>
            <person name="Van den Daele H."/>
            <person name="De Keyser A."/>
            <person name="Buysshaert C."/>
            <person name="Gielen J."/>
            <person name="Villarroel R."/>
            <person name="De Clercq R."/>
            <person name="van Montagu M."/>
            <person name="Rogers J."/>
            <person name="Cronin A."/>
            <person name="Quail M.A."/>
            <person name="Bray-Allen S."/>
            <person name="Clark L."/>
            <person name="Doggett J."/>
            <person name="Hall S."/>
            <person name="Kay M."/>
            <person name="Lennard N."/>
            <person name="McLay K."/>
            <person name="Mayes R."/>
            <person name="Pettett A."/>
            <person name="Rajandream M.A."/>
            <person name="Lyne M."/>
            <person name="Benes V."/>
            <person name="Rechmann S."/>
            <person name="Borkova D."/>
            <person name="Bloecker H."/>
            <person name="Scharfe M."/>
            <person name="Grimm M."/>
            <person name="Loehnert T.-H."/>
            <person name="Dose S."/>
            <person name="de Haan M."/>
            <person name="Maarse A.C."/>
            <person name="Schaefer M."/>
            <person name="Mueller-Auer S."/>
            <person name="Gabel C."/>
            <person name="Fuchs M."/>
            <person name="Fartmann B."/>
            <person name="Granderath K."/>
            <person name="Dauner D."/>
            <person name="Herzl A."/>
            <person name="Neumann S."/>
            <person name="Argiriou A."/>
            <person name="Vitale D."/>
            <person name="Liguori R."/>
            <person name="Piravandi E."/>
            <person name="Massenet O."/>
            <person name="Quigley F."/>
            <person name="Clabauld G."/>
            <person name="Muendlein A."/>
            <person name="Felber R."/>
            <person name="Schnabl S."/>
            <person name="Hiller R."/>
            <person name="Schmidt W."/>
            <person name="Lecharny A."/>
            <person name="Aubourg S."/>
            <person name="Chefdor F."/>
            <person name="Cooke R."/>
            <person name="Berger C."/>
            <person name="Monfort A."/>
            <person name="Casacuberta E."/>
            <person name="Gibbons T."/>
            <person name="Weber N."/>
            <person name="Vandenbol M."/>
            <person name="Bargues M."/>
            <person name="Terol J."/>
            <person name="Torres A."/>
            <person name="Perez-Perez A."/>
            <person name="Purnelle B."/>
            <person name="Bent E."/>
            <person name="Johnson S."/>
            <person name="Tacon D."/>
            <person name="Jesse T."/>
            <person name="Heijnen L."/>
            <person name="Schwarz S."/>
            <person name="Scholler P."/>
            <person name="Heber S."/>
            <person name="Francs P."/>
            <person name="Bielke C."/>
            <person name="Frishman D."/>
            <person name="Haase D."/>
            <person name="Lemcke K."/>
            <person name="Mewes H.-W."/>
            <person name="Stocker S."/>
            <person name="Zaccaria P."/>
            <person name="Bevan M."/>
            <person name="Wilson R.K."/>
            <person name="de la Bastide M."/>
            <person name="Habermann K."/>
            <person name="Parnell L."/>
            <person name="Dedhia N."/>
            <person name="Gnoj L."/>
            <person name="Schutz K."/>
            <person name="Huang E."/>
            <person name="Spiegel L."/>
            <person name="Sekhon M."/>
            <person name="Murray J."/>
            <person name="Sheet P."/>
            <person name="Cordes M."/>
            <person name="Abu-Threideh J."/>
            <person name="Stoneking T."/>
            <person name="Kalicki J."/>
            <person name="Graves T."/>
            <person name="Harmon G."/>
            <person name="Edwards J."/>
            <person name="Latreille P."/>
            <person name="Courtney L."/>
            <person name="Cloud J."/>
            <person name="Abbott A."/>
            <person name="Scott K."/>
            <person name="Johnson D."/>
            <person name="Minx P."/>
            <person name="Bentley D."/>
            <person name="Fulton B."/>
            <person name="Miller N."/>
            <person name="Greco T."/>
            <person name="Kemp K."/>
            <person name="Kramer J."/>
            <person name="Fulton L."/>
            <person name="Mardis E."/>
            <person name="Dante M."/>
            <person name="Pepin K."/>
            <person name="Hillier L.W."/>
            <person name="Nelson J."/>
            <person name="Spieth J."/>
            <person name="Ryan E."/>
            <person name="Andrews S."/>
            <person name="Geisel C."/>
            <person name="Layman D."/>
            <person name="Du H."/>
            <person name="Ali J."/>
            <person name="Berghoff A."/>
            <person name="Jones K."/>
            <person name="Drone K."/>
            <person name="Cotton M."/>
            <person name="Joshu C."/>
            <person name="Antonoiu B."/>
            <person name="Zidanic M."/>
            <person name="Strong C."/>
            <person name="Sun H."/>
            <person name="Lamar B."/>
            <person name="Yordan C."/>
            <person name="Ma P."/>
            <person name="Zhong J."/>
            <person name="Preston R."/>
            <person name="Vil D."/>
            <person name="Shekher M."/>
            <person name="Matero A."/>
            <person name="Shah R."/>
            <person name="Swaby I.K."/>
            <person name="O'Shaughnessy A."/>
            <person name="Rodriguez M."/>
            <person name="Hoffman J."/>
            <person name="Till S."/>
            <person name="Granat S."/>
            <person name="Shohdy N."/>
            <person name="Hasegawa A."/>
            <person name="Hameed A."/>
            <person name="Lodhi M."/>
            <person name="Johnson A."/>
            <person name="Chen E."/>
            <person name="Marra M.A."/>
            <person name="Martienssen R."/>
            <person name="McCombie W.R."/>
        </authorList>
    </citation>
    <scope>NUCLEOTIDE SEQUENCE [LARGE SCALE GENOMIC DNA]</scope>
    <source>
        <strain>cv. Columbia</strain>
    </source>
</reference>
<reference key="2">
    <citation type="journal article" date="2017" name="Plant J.">
        <title>Araport11: a complete reannotation of the Arabidopsis thaliana reference genome.</title>
        <authorList>
            <person name="Cheng C.Y."/>
            <person name="Krishnakumar V."/>
            <person name="Chan A.P."/>
            <person name="Thibaud-Nissen F."/>
            <person name="Schobel S."/>
            <person name="Town C.D."/>
        </authorList>
    </citation>
    <scope>GENOME REANNOTATION</scope>
    <source>
        <strain>cv. Columbia</strain>
    </source>
</reference>
<reference key="3">
    <citation type="journal article" date="2004" name="Carbohydr. Res.">
        <title>Pectin methylesterases: sequence-structural features and phylogenetic relationships.</title>
        <authorList>
            <person name="Markovic O."/>
            <person name="Janecek S."/>
        </authorList>
    </citation>
    <scope>GENE FAMILY</scope>
    <scope>NOMENCLATURE</scope>
</reference>
<gene>
    <name type="primary">PME38</name>
    <name type="synonym">ARATH38</name>
    <name type="ordered locus">At4g00190</name>
    <name type="ORF">F6N15.23</name>
</gene>
<keyword id="KW-0063">Aspartyl esterase</keyword>
<keyword id="KW-0134">Cell wall</keyword>
<keyword id="KW-0961">Cell wall biogenesis/degradation</keyword>
<keyword id="KW-1015">Disulfide bond</keyword>
<keyword id="KW-0325">Glycoprotein</keyword>
<keyword id="KW-0378">Hydrolase</keyword>
<keyword id="KW-1185">Reference proteome</keyword>
<keyword id="KW-0964">Secreted</keyword>
<proteinExistence type="inferred from homology"/>
<accession>O81320</accession>
<sequence>MVFGNEMCDETPHPGECKTLLIKHKPIRSTTQFLQVSVERTLDGAVKAKSDTYFLEPQFGSKQAWEECMDLYEQTIHRLNESVLCPKNVCSRSDVQAWLSTALTNLDTCQEEMSELGVSSHSLESITIDVINTLAINKRMEQNGKEFGISKITMKTLSIGEKVDVVVAQDGSGDYKTIQEAVNGAGERLKGSPRYVIHVKQGVYEEYVNVGIKSNNIMITGDGIGKTIITGDKSKGRGFSTYKSATFVAEGDGFVGRDITIRNTAGPENHQAVALRSNSDMSVFYRCSIEGYQDTLYVHSGRQFFRECDIYGTVDFIFGNAAAVLQNCRIFARNPPNGVNTITAQSRFNPNQTTGIVIHNSVVKGAPGVQLGGVKTYLGRPWRSYARTVVIGTYLDTLIEPNGWIDWDNVTALSTLYYGEYQNSGPGSGTENRVDWAGFHVISDIQEAREFTLPKFIDSASWLPPTKVPFTINL</sequence>
<organism>
    <name type="scientific">Arabidopsis thaliana</name>
    <name type="common">Mouse-ear cress</name>
    <dbReference type="NCBI Taxonomy" id="3702"/>
    <lineage>
        <taxon>Eukaryota</taxon>
        <taxon>Viridiplantae</taxon>
        <taxon>Streptophyta</taxon>
        <taxon>Embryophyta</taxon>
        <taxon>Tracheophyta</taxon>
        <taxon>Spermatophyta</taxon>
        <taxon>Magnoliopsida</taxon>
        <taxon>eudicotyledons</taxon>
        <taxon>Gunneridae</taxon>
        <taxon>Pentapetalae</taxon>
        <taxon>rosids</taxon>
        <taxon>malvids</taxon>
        <taxon>Brassicales</taxon>
        <taxon>Brassicaceae</taxon>
        <taxon>Camelineae</taxon>
        <taxon>Arabidopsis</taxon>
    </lineage>
</organism>
<protein>
    <recommendedName>
        <fullName>Putative pectinesterase/pectinesterase inhibitor 38</fullName>
    </recommendedName>
    <domain>
        <recommendedName>
            <fullName>Pectinesterase inhibitor 38</fullName>
        </recommendedName>
        <alternativeName>
            <fullName>Pectin methylesterase inhibitor 38</fullName>
        </alternativeName>
    </domain>
    <domain>
        <recommendedName>
            <fullName>Pectinesterase 38</fullName>
            <shortName>PE 38</shortName>
            <ecNumber>3.1.1.11</ecNumber>
        </recommendedName>
        <alternativeName>
            <fullName>Pectin methylesterase 38</fullName>
            <shortName>AtPME38</shortName>
        </alternativeName>
    </domain>
</protein>